<name>WDFY1_HUMAN</name>
<protein>
    <recommendedName>
        <fullName>WD repeat and FYVE domain-containing protein 1</fullName>
    </recommendedName>
    <alternativeName>
        <fullName evidence="6">FYVE domain-containing protein localized to endosomes 1</fullName>
        <shortName evidence="6">FENS-1</shortName>
    </alternativeName>
    <alternativeName>
        <fullName>Phosphoinositide-binding protein 1</fullName>
    </alternativeName>
    <alternativeName>
        <fullName>WD40- and FYVE domain-containing protein 1</fullName>
    </alternativeName>
    <alternativeName>
        <fullName>Zinc finger FYVE domain-containing protein 17</fullName>
    </alternativeName>
</protein>
<keyword id="KW-0967">Endosome</keyword>
<keyword id="KW-0479">Metal-binding</keyword>
<keyword id="KW-0597">Phosphoprotein</keyword>
<keyword id="KW-1267">Proteomics identification</keyword>
<keyword id="KW-1185">Reference proteome</keyword>
<keyword id="KW-0677">Repeat</keyword>
<keyword id="KW-0853">WD repeat</keyword>
<keyword id="KW-0862">Zinc</keyword>
<keyword id="KW-0863">Zinc-finger</keyword>
<gene>
    <name type="primary">WDFY1</name>
    <name evidence="6" type="synonym">FENS1</name>
    <name type="synonym">KIAA1435</name>
    <name type="synonym">WDF1</name>
    <name type="synonym">ZFYVE17</name>
</gene>
<proteinExistence type="evidence at protein level"/>
<comment type="function">
    <text evidence="5">Positively regulates TLR3- and TLR4-mediated signaling pathways by bridging the interaction between TLR3 or TLR4 and TICAM1. Promotes TLR3/4 ligand-induced activation of transcription factors IRF3 and NF-kappa-B, as well as the production of IFN-beta and inflammatory cytokines (PubMed:25736436).</text>
</comment>
<comment type="subunit">
    <text evidence="1 3 5">Binds PtdIns3P in vitro with high specificity over other phosphoinositides. Interacts (via WD repeat 2) with tyrosine-phosphorylated TLR3 (via TIR domain) in response to poly(I:C) (PubMed:25736436). Interacts with TICAM1 in response to poly(I:C) (By similarity). Interacts with TLR4 in response to LPS (By similarity).</text>
</comment>
<comment type="interaction">
    <interactant intactId="EBI-4403108">
        <id>Q8IWB7</id>
    </interactant>
    <interactant intactId="EBI-749248">
        <id>Q8N131</id>
        <label>TMEM123</label>
    </interactant>
    <organismsDiffer>false</organismsDiffer>
    <experiments>2</experiments>
</comment>
<comment type="subcellular location">
    <subcellularLocation>
        <location evidence="3 5">Early endosome</location>
    </subcellularLocation>
</comment>
<comment type="domain">
    <text evidence="4 5">The FYVE-type zinc finger domain mediates interactions with phosphatidylinositol 3-phosphate in membranes of early endosomes and penetrates bilayers. The FYVE domain insertion into PtdIns(3)P-enriched membranes is substantially increased in acidic conditions. The FYVE domain is required for its function in regulating TLR3 signaling (PubMed:25736436).</text>
</comment>
<comment type="sequence caution" evidence="7">
    <conflict type="erroneous initiation">
        <sequence resource="EMBL-CDS" id="BAA92673"/>
    </conflict>
    <text>Extended N-terminus.</text>
</comment>
<sequence length="410" mass="46324">MAAEIHSRPQSSRPVLLSKIEGHQDAVTAALLIPKEDGVITASEDRTIRVWLKRDSGQYWPSIYHTMASPCSAMAYHHDSRRIFVGQDNGAVMEFHVSEDFNKMNFIKTYPAHQNRVSAIIFSLATEWVISTGHDKCVSWMCTRSGNMLGRHFFTSWASCLQYDFDTQYAFVGDYSGQITLLKLEQNTCSVITTLKGHEGSVACLWWDPIQRLLFSGASDNSIIMWDIGGRKGRTLLLQGHHDKVQSLCYLQLTRQLVSCSSDGGIAVWNMDVSREEAPQWLESDSCQKCEQPFFWNIKQMWDTKTLGLRQHHCRKCGQAVCGKCSSKRSSYPVMGFEFQVRVCDSCYDSIKDEDRTSLATFHEGKHNISHMSMDIARGLMVTCGTDRIVKIWDMTPVVGCSLATGFSPH</sequence>
<dbReference type="EMBL" id="AJ310568">
    <property type="protein sequence ID" value="CAC83947.1"/>
    <property type="molecule type" value="mRNA"/>
</dbReference>
<dbReference type="EMBL" id="AF411977">
    <property type="protein sequence ID" value="AAL04161.1"/>
    <property type="molecule type" value="mRNA"/>
</dbReference>
<dbReference type="EMBL" id="AB037856">
    <property type="protein sequence ID" value="BAA92673.1"/>
    <property type="status" value="ALT_INIT"/>
    <property type="molecule type" value="mRNA"/>
</dbReference>
<dbReference type="EMBL" id="AK022888">
    <property type="protein sequence ID" value="BAB14294.1"/>
    <property type="molecule type" value="mRNA"/>
</dbReference>
<dbReference type="EMBL" id="AC073641">
    <property type="protein sequence ID" value="AAY14924.1"/>
    <property type="molecule type" value="Genomic_DNA"/>
</dbReference>
<dbReference type="EMBL" id="CH471063">
    <property type="protein sequence ID" value="EAW70817.1"/>
    <property type="molecule type" value="Genomic_DNA"/>
</dbReference>
<dbReference type="EMBL" id="BC040525">
    <property type="protein sequence ID" value="AAH40525.1"/>
    <property type="molecule type" value="mRNA"/>
</dbReference>
<dbReference type="EMBL" id="BC065934">
    <property type="protein sequence ID" value="AAH65934.1"/>
    <property type="molecule type" value="mRNA"/>
</dbReference>
<dbReference type="CCDS" id="CCDS33387.1"/>
<dbReference type="RefSeq" id="NP_065881.1">
    <property type="nucleotide sequence ID" value="NM_020830.5"/>
</dbReference>
<dbReference type="SMR" id="Q8IWB7"/>
<dbReference type="BioGRID" id="121641">
    <property type="interactions" value="68"/>
</dbReference>
<dbReference type="FunCoup" id="Q8IWB7">
    <property type="interactions" value="4532"/>
</dbReference>
<dbReference type="IntAct" id="Q8IWB7">
    <property type="interactions" value="32"/>
</dbReference>
<dbReference type="STRING" id="9606.ENSP00000233055"/>
<dbReference type="GlyGen" id="Q8IWB7">
    <property type="glycosylation" value="1 site, 1 O-linked glycan (1 site)"/>
</dbReference>
<dbReference type="iPTMnet" id="Q8IWB7"/>
<dbReference type="PhosphoSitePlus" id="Q8IWB7"/>
<dbReference type="SwissPalm" id="Q8IWB7"/>
<dbReference type="BioMuta" id="WDFY1"/>
<dbReference type="DMDM" id="51316866"/>
<dbReference type="jPOST" id="Q8IWB7"/>
<dbReference type="MassIVE" id="Q8IWB7"/>
<dbReference type="PaxDb" id="9606-ENSP00000233055"/>
<dbReference type="PeptideAtlas" id="Q8IWB7"/>
<dbReference type="ProteomicsDB" id="70838"/>
<dbReference type="Pumba" id="Q8IWB7"/>
<dbReference type="Antibodypedia" id="34364">
    <property type="antibodies" value="144 antibodies from 27 providers"/>
</dbReference>
<dbReference type="DNASU" id="57590"/>
<dbReference type="Ensembl" id="ENST00000233055.9">
    <property type="protein sequence ID" value="ENSP00000233055.4"/>
    <property type="gene ID" value="ENSG00000085449.15"/>
</dbReference>
<dbReference type="GeneID" id="57590"/>
<dbReference type="KEGG" id="hsa:57590"/>
<dbReference type="MANE-Select" id="ENST00000233055.9">
    <property type="protein sequence ID" value="ENSP00000233055.4"/>
    <property type="RefSeq nucleotide sequence ID" value="NM_020830.5"/>
    <property type="RefSeq protein sequence ID" value="NP_065881.1"/>
</dbReference>
<dbReference type="UCSC" id="uc002vnq.4">
    <property type="organism name" value="human"/>
</dbReference>
<dbReference type="AGR" id="HGNC:20451"/>
<dbReference type="CTD" id="57590"/>
<dbReference type="DisGeNET" id="57590"/>
<dbReference type="GeneCards" id="WDFY1"/>
<dbReference type="HGNC" id="HGNC:20451">
    <property type="gene designation" value="WDFY1"/>
</dbReference>
<dbReference type="HPA" id="ENSG00000085449">
    <property type="expression patterns" value="Low tissue specificity"/>
</dbReference>
<dbReference type="MalaCards" id="WDFY1"/>
<dbReference type="MIM" id="618080">
    <property type="type" value="gene"/>
</dbReference>
<dbReference type="neXtProt" id="NX_Q8IWB7"/>
<dbReference type="OpenTargets" id="ENSG00000085449"/>
<dbReference type="PharmGKB" id="PA134929936"/>
<dbReference type="VEuPathDB" id="HostDB:ENSG00000085449"/>
<dbReference type="eggNOG" id="KOG1409">
    <property type="taxonomic scope" value="Eukaryota"/>
</dbReference>
<dbReference type="GeneTree" id="ENSGT00940000157731"/>
<dbReference type="HOGENOM" id="CLU_046919_0_0_1"/>
<dbReference type="InParanoid" id="Q8IWB7"/>
<dbReference type="OMA" id="IFCLGAE"/>
<dbReference type="OrthoDB" id="63070at2759"/>
<dbReference type="PAN-GO" id="Q8IWB7">
    <property type="GO annotations" value="3 GO annotations based on evolutionary models"/>
</dbReference>
<dbReference type="PhylomeDB" id="Q8IWB7"/>
<dbReference type="TreeFam" id="TF314470"/>
<dbReference type="PathwayCommons" id="Q8IWB7"/>
<dbReference type="SignaLink" id="Q8IWB7"/>
<dbReference type="SIGNOR" id="Q8IWB7"/>
<dbReference type="BioGRID-ORCS" id="57590">
    <property type="hits" value="7 hits in 1162 CRISPR screens"/>
</dbReference>
<dbReference type="ChiTaRS" id="WDFY1">
    <property type="organism name" value="human"/>
</dbReference>
<dbReference type="GenomeRNAi" id="57590"/>
<dbReference type="Pharos" id="Q8IWB7">
    <property type="development level" value="Tbio"/>
</dbReference>
<dbReference type="PRO" id="PR:Q8IWB7"/>
<dbReference type="Proteomes" id="UP000005640">
    <property type="component" value="Chromosome 2"/>
</dbReference>
<dbReference type="RNAct" id="Q8IWB7">
    <property type="molecule type" value="protein"/>
</dbReference>
<dbReference type="Bgee" id="ENSG00000085449">
    <property type="expression patterns" value="Expressed in secondary oocyte and 190 other cell types or tissues"/>
</dbReference>
<dbReference type="ExpressionAtlas" id="Q8IWB7">
    <property type="expression patterns" value="baseline and differential"/>
</dbReference>
<dbReference type="GO" id="GO:0030054">
    <property type="term" value="C:cell junction"/>
    <property type="evidence" value="ECO:0000314"/>
    <property type="project" value="HPA"/>
</dbReference>
<dbReference type="GO" id="GO:0005829">
    <property type="term" value="C:cytosol"/>
    <property type="evidence" value="ECO:0000314"/>
    <property type="project" value="UniProtKB"/>
</dbReference>
<dbReference type="GO" id="GO:0005769">
    <property type="term" value="C:early endosome"/>
    <property type="evidence" value="ECO:0000314"/>
    <property type="project" value="UniProtKB"/>
</dbReference>
<dbReference type="GO" id="GO:0005794">
    <property type="term" value="C:Golgi apparatus"/>
    <property type="evidence" value="ECO:0000314"/>
    <property type="project" value="HPA"/>
</dbReference>
<dbReference type="GO" id="GO:0043231">
    <property type="term" value="C:intracellular membrane-bounded organelle"/>
    <property type="evidence" value="ECO:0000314"/>
    <property type="project" value="HPA"/>
</dbReference>
<dbReference type="GO" id="GO:0005730">
    <property type="term" value="C:nucleolus"/>
    <property type="evidence" value="ECO:0000314"/>
    <property type="project" value="HPA"/>
</dbReference>
<dbReference type="GO" id="GO:0005634">
    <property type="term" value="C:nucleus"/>
    <property type="evidence" value="ECO:0000314"/>
    <property type="project" value="UniProtKB"/>
</dbReference>
<dbReference type="GO" id="GO:0005545">
    <property type="term" value="F:1-phosphatidylinositol binding"/>
    <property type="evidence" value="ECO:0000314"/>
    <property type="project" value="UniProtKB"/>
</dbReference>
<dbReference type="GO" id="GO:0008270">
    <property type="term" value="F:zinc ion binding"/>
    <property type="evidence" value="ECO:0000303"/>
    <property type="project" value="UniProtKB"/>
</dbReference>
<dbReference type="GO" id="GO:0034141">
    <property type="term" value="P:positive regulation of toll-like receptor 3 signaling pathway"/>
    <property type="evidence" value="ECO:0000315"/>
    <property type="project" value="UniProtKB"/>
</dbReference>
<dbReference type="GO" id="GO:0034145">
    <property type="term" value="P:positive regulation of toll-like receptor 4 signaling pathway"/>
    <property type="evidence" value="ECO:0000315"/>
    <property type="project" value="UniProtKB"/>
</dbReference>
<dbReference type="CDD" id="cd15756">
    <property type="entry name" value="FYVE_WDFY1"/>
    <property type="match status" value="1"/>
</dbReference>
<dbReference type="FunFam" id="2.130.10.10:FF:000285">
    <property type="entry name" value="WD repeat and FYVE domain-containing protein 1"/>
    <property type="match status" value="1"/>
</dbReference>
<dbReference type="FunFam" id="2.130.10.10:FF:000433">
    <property type="entry name" value="WD repeat and FYVE domain-containing protein 1"/>
    <property type="match status" value="1"/>
</dbReference>
<dbReference type="FunFam" id="3.30.40.10:FF:000105">
    <property type="entry name" value="WD repeat and FYVE domain-containing protein 2"/>
    <property type="match status" value="1"/>
</dbReference>
<dbReference type="Gene3D" id="2.130.10.10">
    <property type="entry name" value="YVTN repeat-like/Quinoprotein amine dehydrogenase"/>
    <property type="match status" value="2"/>
</dbReference>
<dbReference type="Gene3D" id="3.30.40.10">
    <property type="entry name" value="Zinc/RING finger domain, C3HC4 (zinc finger)"/>
    <property type="match status" value="1"/>
</dbReference>
<dbReference type="InterPro" id="IPR020472">
    <property type="entry name" value="G-protein_beta_WD-40_rep"/>
</dbReference>
<dbReference type="InterPro" id="IPR015943">
    <property type="entry name" value="WD40/YVTN_repeat-like_dom_sf"/>
</dbReference>
<dbReference type="InterPro" id="IPR019775">
    <property type="entry name" value="WD40_repeat_CS"/>
</dbReference>
<dbReference type="InterPro" id="IPR036322">
    <property type="entry name" value="WD40_repeat_dom_sf"/>
</dbReference>
<dbReference type="InterPro" id="IPR001680">
    <property type="entry name" value="WD40_rpt"/>
</dbReference>
<dbReference type="InterPro" id="IPR042234">
    <property type="entry name" value="WDFY1/WDFY2"/>
</dbReference>
<dbReference type="InterPro" id="IPR042733">
    <property type="entry name" value="WDFY1_FYVE"/>
</dbReference>
<dbReference type="InterPro" id="IPR000306">
    <property type="entry name" value="Znf_FYVE"/>
</dbReference>
<dbReference type="InterPro" id="IPR017455">
    <property type="entry name" value="Znf_FYVE-rel"/>
</dbReference>
<dbReference type="InterPro" id="IPR011011">
    <property type="entry name" value="Znf_FYVE_PHD"/>
</dbReference>
<dbReference type="InterPro" id="IPR013083">
    <property type="entry name" value="Znf_RING/FYVE/PHD"/>
</dbReference>
<dbReference type="PANTHER" id="PTHR46189">
    <property type="entry name" value="LD41958P"/>
    <property type="match status" value="1"/>
</dbReference>
<dbReference type="PANTHER" id="PTHR46189:SF2">
    <property type="entry name" value="WD REPEAT AND FYVE DOMAIN-CONTAINING PROTEIN 1"/>
    <property type="match status" value="1"/>
</dbReference>
<dbReference type="Pfam" id="PF01363">
    <property type="entry name" value="FYVE"/>
    <property type="match status" value="1"/>
</dbReference>
<dbReference type="Pfam" id="PF00400">
    <property type="entry name" value="WD40"/>
    <property type="match status" value="5"/>
</dbReference>
<dbReference type="PRINTS" id="PR00320">
    <property type="entry name" value="GPROTEINBRPT"/>
</dbReference>
<dbReference type="SMART" id="SM00064">
    <property type="entry name" value="FYVE"/>
    <property type="match status" value="1"/>
</dbReference>
<dbReference type="SMART" id="SM00320">
    <property type="entry name" value="WD40"/>
    <property type="match status" value="7"/>
</dbReference>
<dbReference type="SUPFAM" id="SSF57903">
    <property type="entry name" value="FYVE/PHD zinc finger"/>
    <property type="match status" value="1"/>
</dbReference>
<dbReference type="SUPFAM" id="SSF50978">
    <property type="entry name" value="WD40 repeat-like"/>
    <property type="match status" value="1"/>
</dbReference>
<dbReference type="PROSITE" id="PS00678">
    <property type="entry name" value="WD_REPEATS_1"/>
    <property type="match status" value="3"/>
</dbReference>
<dbReference type="PROSITE" id="PS50082">
    <property type="entry name" value="WD_REPEATS_2"/>
    <property type="match status" value="3"/>
</dbReference>
<dbReference type="PROSITE" id="PS50294">
    <property type="entry name" value="WD_REPEATS_REGION"/>
    <property type="match status" value="1"/>
</dbReference>
<dbReference type="PROSITE" id="PS50178">
    <property type="entry name" value="ZF_FYVE"/>
    <property type="match status" value="1"/>
</dbReference>
<reference key="1">
    <citation type="journal article" date="2001" name="J. Cell Sci.">
        <title>FENS-1 and DFCP1 are FYVE domain-containing proteins with distinct functions in the endosomal and Golgi compartments.</title>
        <authorList>
            <person name="Ridley S.H."/>
            <person name="Ktistakis N."/>
            <person name="Davidson K."/>
            <person name="Anderson K.E."/>
            <person name="Manifava M."/>
            <person name="Ellson C.D."/>
            <person name="Lipp P."/>
            <person name="Bootman M."/>
            <person name="Coadwell J."/>
            <person name="Nazarian A."/>
            <person name="Erdjument-Bromage H."/>
            <person name="Tempst P."/>
            <person name="Cooper M.A."/>
            <person name="Thuring J.W.J.F."/>
            <person name="Lim Z.-Y."/>
            <person name="Holmes A.B."/>
            <person name="Stephens L.R."/>
            <person name="Hawkins P.T."/>
        </authorList>
    </citation>
    <scope>NUCLEOTIDE SEQUENCE [MRNA]</scope>
    <scope>SUBCELLULAR LOCATION</scope>
    <scope>BINDING TO PHOSPHOINOSITIDES</scope>
</reference>
<reference key="2">
    <citation type="submission" date="2001-08" db="EMBL/GenBank/DDBJ databases">
        <title>WD40- and FYVE-domain containing protein 1 (WDF1).</title>
        <authorList>
            <person name="Hong W."/>
        </authorList>
    </citation>
    <scope>NUCLEOTIDE SEQUENCE [MRNA]</scope>
</reference>
<reference key="3">
    <citation type="journal article" date="2000" name="DNA Res.">
        <title>Prediction of the coding sequences of unidentified human genes. XVI. The complete sequences of 150 new cDNA clones from brain which code for large proteins in vitro.</title>
        <authorList>
            <person name="Nagase T."/>
            <person name="Kikuno R."/>
            <person name="Ishikawa K."/>
            <person name="Hirosawa M."/>
            <person name="Ohara O."/>
        </authorList>
    </citation>
    <scope>NUCLEOTIDE SEQUENCE [LARGE SCALE MRNA]</scope>
    <source>
        <tissue>Brain</tissue>
    </source>
</reference>
<reference key="4">
    <citation type="journal article" date="2004" name="Nat. Genet.">
        <title>Complete sequencing and characterization of 21,243 full-length human cDNAs.</title>
        <authorList>
            <person name="Ota T."/>
            <person name="Suzuki Y."/>
            <person name="Nishikawa T."/>
            <person name="Otsuki T."/>
            <person name="Sugiyama T."/>
            <person name="Irie R."/>
            <person name="Wakamatsu A."/>
            <person name="Hayashi K."/>
            <person name="Sato H."/>
            <person name="Nagai K."/>
            <person name="Kimura K."/>
            <person name="Makita H."/>
            <person name="Sekine M."/>
            <person name="Obayashi M."/>
            <person name="Nishi T."/>
            <person name="Shibahara T."/>
            <person name="Tanaka T."/>
            <person name="Ishii S."/>
            <person name="Yamamoto J."/>
            <person name="Saito K."/>
            <person name="Kawai Y."/>
            <person name="Isono Y."/>
            <person name="Nakamura Y."/>
            <person name="Nagahari K."/>
            <person name="Murakami K."/>
            <person name="Yasuda T."/>
            <person name="Iwayanagi T."/>
            <person name="Wagatsuma M."/>
            <person name="Shiratori A."/>
            <person name="Sudo H."/>
            <person name="Hosoiri T."/>
            <person name="Kaku Y."/>
            <person name="Kodaira H."/>
            <person name="Kondo H."/>
            <person name="Sugawara M."/>
            <person name="Takahashi M."/>
            <person name="Kanda K."/>
            <person name="Yokoi T."/>
            <person name="Furuya T."/>
            <person name="Kikkawa E."/>
            <person name="Omura Y."/>
            <person name="Abe K."/>
            <person name="Kamihara K."/>
            <person name="Katsuta N."/>
            <person name="Sato K."/>
            <person name="Tanikawa M."/>
            <person name="Yamazaki M."/>
            <person name="Ninomiya K."/>
            <person name="Ishibashi T."/>
            <person name="Yamashita H."/>
            <person name="Murakawa K."/>
            <person name="Fujimori K."/>
            <person name="Tanai H."/>
            <person name="Kimata M."/>
            <person name="Watanabe M."/>
            <person name="Hiraoka S."/>
            <person name="Chiba Y."/>
            <person name="Ishida S."/>
            <person name="Ono Y."/>
            <person name="Takiguchi S."/>
            <person name="Watanabe S."/>
            <person name="Yosida M."/>
            <person name="Hotuta T."/>
            <person name="Kusano J."/>
            <person name="Kanehori K."/>
            <person name="Takahashi-Fujii A."/>
            <person name="Hara H."/>
            <person name="Tanase T.-O."/>
            <person name="Nomura Y."/>
            <person name="Togiya S."/>
            <person name="Komai F."/>
            <person name="Hara R."/>
            <person name="Takeuchi K."/>
            <person name="Arita M."/>
            <person name="Imose N."/>
            <person name="Musashino K."/>
            <person name="Yuuki H."/>
            <person name="Oshima A."/>
            <person name="Sasaki N."/>
            <person name="Aotsuka S."/>
            <person name="Yoshikawa Y."/>
            <person name="Matsunawa H."/>
            <person name="Ichihara T."/>
            <person name="Shiohata N."/>
            <person name="Sano S."/>
            <person name="Moriya S."/>
            <person name="Momiyama H."/>
            <person name="Satoh N."/>
            <person name="Takami S."/>
            <person name="Terashima Y."/>
            <person name="Suzuki O."/>
            <person name="Nakagawa S."/>
            <person name="Senoh A."/>
            <person name="Mizoguchi H."/>
            <person name="Goto Y."/>
            <person name="Shimizu F."/>
            <person name="Wakebe H."/>
            <person name="Hishigaki H."/>
            <person name="Watanabe T."/>
            <person name="Sugiyama A."/>
            <person name="Takemoto M."/>
            <person name="Kawakami B."/>
            <person name="Yamazaki M."/>
            <person name="Watanabe K."/>
            <person name="Kumagai A."/>
            <person name="Itakura S."/>
            <person name="Fukuzumi Y."/>
            <person name="Fujimori Y."/>
            <person name="Komiyama M."/>
            <person name="Tashiro H."/>
            <person name="Tanigami A."/>
            <person name="Fujiwara T."/>
            <person name="Ono T."/>
            <person name="Yamada K."/>
            <person name="Fujii Y."/>
            <person name="Ozaki K."/>
            <person name="Hirao M."/>
            <person name="Ohmori Y."/>
            <person name="Kawabata A."/>
            <person name="Hikiji T."/>
            <person name="Kobatake N."/>
            <person name="Inagaki H."/>
            <person name="Ikema Y."/>
            <person name="Okamoto S."/>
            <person name="Okitani R."/>
            <person name="Kawakami T."/>
            <person name="Noguchi S."/>
            <person name="Itoh T."/>
            <person name="Shigeta K."/>
            <person name="Senba T."/>
            <person name="Matsumura K."/>
            <person name="Nakajima Y."/>
            <person name="Mizuno T."/>
            <person name="Morinaga M."/>
            <person name="Sasaki M."/>
            <person name="Togashi T."/>
            <person name="Oyama M."/>
            <person name="Hata H."/>
            <person name="Watanabe M."/>
            <person name="Komatsu T."/>
            <person name="Mizushima-Sugano J."/>
            <person name="Satoh T."/>
            <person name="Shirai Y."/>
            <person name="Takahashi Y."/>
            <person name="Nakagawa K."/>
            <person name="Okumura K."/>
            <person name="Nagase T."/>
            <person name="Nomura N."/>
            <person name="Kikuchi H."/>
            <person name="Masuho Y."/>
            <person name="Yamashita R."/>
            <person name="Nakai K."/>
            <person name="Yada T."/>
            <person name="Nakamura Y."/>
            <person name="Ohara O."/>
            <person name="Isogai T."/>
            <person name="Sugano S."/>
        </authorList>
    </citation>
    <scope>NUCLEOTIDE SEQUENCE [LARGE SCALE MRNA]</scope>
</reference>
<reference key="5">
    <citation type="journal article" date="2005" name="Nature">
        <title>Generation and annotation of the DNA sequences of human chromosomes 2 and 4.</title>
        <authorList>
            <person name="Hillier L.W."/>
            <person name="Graves T.A."/>
            <person name="Fulton R.S."/>
            <person name="Fulton L.A."/>
            <person name="Pepin K.H."/>
            <person name="Minx P."/>
            <person name="Wagner-McPherson C."/>
            <person name="Layman D."/>
            <person name="Wylie K."/>
            <person name="Sekhon M."/>
            <person name="Becker M.C."/>
            <person name="Fewell G.A."/>
            <person name="Delehaunty K.D."/>
            <person name="Miner T.L."/>
            <person name="Nash W.E."/>
            <person name="Kremitzki C."/>
            <person name="Oddy L."/>
            <person name="Du H."/>
            <person name="Sun H."/>
            <person name="Bradshaw-Cordum H."/>
            <person name="Ali J."/>
            <person name="Carter J."/>
            <person name="Cordes M."/>
            <person name="Harris A."/>
            <person name="Isak A."/>
            <person name="van Brunt A."/>
            <person name="Nguyen C."/>
            <person name="Du F."/>
            <person name="Courtney L."/>
            <person name="Kalicki J."/>
            <person name="Ozersky P."/>
            <person name="Abbott S."/>
            <person name="Armstrong J."/>
            <person name="Belter E.A."/>
            <person name="Caruso L."/>
            <person name="Cedroni M."/>
            <person name="Cotton M."/>
            <person name="Davidson T."/>
            <person name="Desai A."/>
            <person name="Elliott G."/>
            <person name="Erb T."/>
            <person name="Fronick C."/>
            <person name="Gaige T."/>
            <person name="Haakenson W."/>
            <person name="Haglund K."/>
            <person name="Holmes A."/>
            <person name="Harkins R."/>
            <person name="Kim K."/>
            <person name="Kruchowski S.S."/>
            <person name="Strong C.M."/>
            <person name="Grewal N."/>
            <person name="Goyea E."/>
            <person name="Hou S."/>
            <person name="Levy A."/>
            <person name="Martinka S."/>
            <person name="Mead K."/>
            <person name="McLellan M.D."/>
            <person name="Meyer R."/>
            <person name="Randall-Maher J."/>
            <person name="Tomlinson C."/>
            <person name="Dauphin-Kohlberg S."/>
            <person name="Kozlowicz-Reilly A."/>
            <person name="Shah N."/>
            <person name="Swearengen-Shahid S."/>
            <person name="Snider J."/>
            <person name="Strong J.T."/>
            <person name="Thompson J."/>
            <person name="Yoakum M."/>
            <person name="Leonard S."/>
            <person name="Pearman C."/>
            <person name="Trani L."/>
            <person name="Radionenko M."/>
            <person name="Waligorski J.E."/>
            <person name="Wang C."/>
            <person name="Rock S.M."/>
            <person name="Tin-Wollam A.-M."/>
            <person name="Maupin R."/>
            <person name="Latreille P."/>
            <person name="Wendl M.C."/>
            <person name="Yang S.-P."/>
            <person name="Pohl C."/>
            <person name="Wallis J.W."/>
            <person name="Spieth J."/>
            <person name="Bieri T.A."/>
            <person name="Berkowicz N."/>
            <person name="Nelson J.O."/>
            <person name="Osborne J."/>
            <person name="Ding L."/>
            <person name="Meyer R."/>
            <person name="Sabo A."/>
            <person name="Shotland Y."/>
            <person name="Sinha P."/>
            <person name="Wohldmann P.E."/>
            <person name="Cook L.L."/>
            <person name="Hickenbotham M.T."/>
            <person name="Eldred J."/>
            <person name="Williams D."/>
            <person name="Jones T.A."/>
            <person name="She X."/>
            <person name="Ciccarelli F.D."/>
            <person name="Izaurralde E."/>
            <person name="Taylor J."/>
            <person name="Schmutz J."/>
            <person name="Myers R.M."/>
            <person name="Cox D.R."/>
            <person name="Huang X."/>
            <person name="McPherson J.D."/>
            <person name="Mardis E.R."/>
            <person name="Clifton S.W."/>
            <person name="Warren W.C."/>
            <person name="Chinwalla A.T."/>
            <person name="Eddy S.R."/>
            <person name="Marra M.A."/>
            <person name="Ovcharenko I."/>
            <person name="Furey T.S."/>
            <person name="Miller W."/>
            <person name="Eichler E.E."/>
            <person name="Bork P."/>
            <person name="Suyama M."/>
            <person name="Torrents D."/>
            <person name="Waterston R.H."/>
            <person name="Wilson R.K."/>
        </authorList>
    </citation>
    <scope>NUCLEOTIDE SEQUENCE [LARGE SCALE GENOMIC DNA]</scope>
</reference>
<reference key="6">
    <citation type="submission" date="2005-07" db="EMBL/GenBank/DDBJ databases">
        <authorList>
            <person name="Mural R.J."/>
            <person name="Istrail S."/>
            <person name="Sutton G."/>
            <person name="Florea L."/>
            <person name="Halpern A.L."/>
            <person name="Mobarry C.M."/>
            <person name="Lippert R."/>
            <person name="Walenz B."/>
            <person name="Shatkay H."/>
            <person name="Dew I."/>
            <person name="Miller J.R."/>
            <person name="Flanigan M.J."/>
            <person name="Edwards N.J."/>
            <person name="Bolanos R."/>
            <person name="Fasulo D."/>
            <person name="Halldorsson B.V."/>
            <person name="Hannenhalli S."/>
            <person name="Turner R."/>
            <person name="Yooseph S."/>
            <person name="Lu F."/>
            <person name="Nusskern D.R."/>
            <person name="Shue B.C."/>
            <person name="Zheng X.H."/>
            <person name="Zhong F."/>
            <person name="Delcher A.L."/>
            <person name="Huson D.H."/>
            <person name="Kravitz S.A."/>
            <person name="Mouchard L."/>
            <person name="Reinert K."/>
            <person name="Remington K.A."/>
            <person name="Clark A.G."/>
            <person name="Waterman M.S."/>
            <person name="Eichler E.E."/>
            <person name="Adams M.D."/>
            <person name="Hunkapiller M.W."/>
            <person name="Myers E.W."/>
            <person name="Venter J.C."/>
        </authorList>
    </citation>
    <scope>NUCLEOTIDE SEQUENCE [LARGE SCALE GENOMIC DNA]</scope>
</reference>
<reference key="7">
    <citation type="journal article" date="2004" name="Genome Res.">
        <title>The status, quality, and expansion of the NIH full-length cDNA project: the Mammalian Gene Collection (MGC).</title>
        <authorList>
            <consortium name="The MGC Project Team"/>
        </authorList>
    </citation>
    <scope>NUCLEOTIDE SEQUENCE [LARGE SCALE MRNA]</scope>
    <source>
        <tissue>Brain</tissue>
        <tissue>Skin</tissue>
    </source>
</reference>
<reference key="8">
    <citation type="journal article" date="2009" name="Proteins">
        <title>Membrane insertion of the FYVE domain is modulated by pH.</title>
        <authorList>
            <person name="He J."/>
            <person name="Vora M."/>
            <person name="Haney R.M."/>
            <person name="Filonov G.S."/>
            <person name="Musselman C.A."/>
            <person name="Burd C.G."/>
            <person name="Kutateladze A.G."/>
            <person name="Verkhusha V.V."/>
            <person name="Stahelin R.V."/>
            <person name="Kutateladze T.G."/>
        </authorList>
    </citation>
    <scope>DOMAIN FYVE-TYPE ZINC-FINGER</scope>
</reference>
<reference key="9">
    <citation type="journal article" date="2010" name="Sci. Signal.">
        <title>Quantitative phosphoproteomics reveals widespread full phosphorylation site occupancy during mitosis.</title>
        <authorList>
            <person name="Olsen J.V."/>
            <person name="Vermeulen M."/>
            <person name="Santamaria A."/>
            <person name="Kumar C."/>
            <person name="Miller M.L."/>
            <person name="Jensen L.J."/>
            <person name="Gnad F."/>
            <person name="Cox J."/>
            <person name="Jensen T.S."/>
            <person name="Nigg E.A."/>
            <person name="Brunak S."/>
            <person name="Mann M."/>
        </authorList>
    </citation>
    <scope>PHOSPHORYLATION [LARGE SCALE ANALYSIS] AT SER-408</scope>
    <scope>IDENTIFICATION BY MASS SPECTROMETRY [LARGE SCALE ANALYSIS]</scope>
    <source>
        <tissue>Cervix carcinoma</tissue>
    </source>
</reference>
<reference key="10">
    <citation type="journal article" date="2011" name="BMC Syst. Biol.">
        <title>Initial characterization of the human central proteome.</title>
        <authorList>
            <person name="Burkard T.R."/>
            <person name="Planyavsky M."/>
            <person name="Kaupe I."/>
            <person name="Breitwieser F.P."/>
            <person name="Buerckstuemmer T."/>
            <person name="Bennett K.L."/>
            <person name="Superti-Furga G."/>
            <person name="Colinge J."/>
        </authorList>
    </citation>
    <scope>IDENTIFICATION BY MASS SPECTROMETRY [LARGE SCALE ANALYSIS]</scope>
</reference>
<reference key="11">
    <citation type="journal article" date="2015" name="EMBO Rep.">
        <title>WDFY1 mediates TLR3/4 signaling by recruiting TRIF.</title>
        <authorList>
            <person name="Hu Y.H."/>
            <person name="Zhang Y."/>
            <person name="Jiang L.Q."/>
            <person name="Wang S."/>
            <person name="Lei C.Q."/>
            <person name="Sun M.S."/>
            <person name="Shu H.B."/>
            <person name="Liu Y."/>
        </authorList>
    </citation>
    <scope>FUNCTION</scope>
    <scope>INTERACTION WITH TLR3</scope>
    <scope>SUBCELLULAR LOCATION</scope>
    <scope>DOMAIN FYVE-TYPE ZINC-FINGER</scope>
</reference>
<reference key="12">
    <citation type="journal article" date="2015" name="Proteomics">
        <title>N-terminome analysis of the human mitochondrial proteome.</title>
        <authorList>
            <person name="Vaca Jacome A.S."/>
            <person name="Rabilloud T."/>
            <person name="Schaeffer-Reiss C."/>
            <person name="Rompais M."/>
            <person name="Ayoub D."/>
            <person name="Lane L."/>
            <person name="Bairoch A."/>
            <person name="Van Dorsselaer A."/>
            <person name="Carapito C."/>
        </authorList>
    </citation>
    <scope>IDENTIFICATION BY MASS SPECTROMETRY [LARGE SCALE ANALYSIS]</scope>
</reference>
<feature type="chain" id="PRO_0000051335" description="WD repeat and FYVE domain-containing protein 1">
    <location>
        <begin position="1"/>
        <end position="410"/>
    </location>
</feature>
<feature type="repeat" description="WD 1">
    <location>
        <begin position="22"/>
        <end position="61"/>
    </location>
</feature>
<feature type="repeat" description="WD 2">
    <location>
        <begin position="66"/>
        <end position="105"/>
    </location>
</feature>
<feature type="repeat" description="WD 3">
    <location>
        <begin position="112"/>
        <end position="150"/>
    </location>
</feature>
<feature type="repeat" description="WD 4">
    <location>
        <begin position="153"/>
        <end position="192"/>
    </location>
</feature>
<feature type="repeat" description="WD 5">
    <location>
        <begin position="197"/>
        <end position="236"/>
    </location>
</feature>
<feature type="repeat" description="WD 6">
    <location>
        <begin position="240"/>
        <end position="279"/>
    </location>
</feature>
<feature type="repeat" description="WD 7">
    <location>
        <begin position="364"/>
        <end position="403"/>
    </location>
</feature>
<feature type="zinc finger region" description="FYVE-type" evidence="2">
    <location>
        <begin position="281"/>
        <end position="352"/>
    </location>
</feature>
<feature type="binding site" evidence="2">
    <location>
        <position position="287"/>
    </location>
    <ligand>
        <name>Zn(2+)</name>
        <dbReference type="ChEBI" id="CHEBI:29105"/>
        <label>1</label>
    </ligand>
</feature>
<feature type="binding site" evidence="2">
    <location>
        <position position="290"/>
    </location>
    <ligand>
        <name>Zn(2+)</name>
        <dbReference type="ChEBI" id="CHEBI:29105"/>
        <label>1</label>
    </ligand>
</feature>
<feature type="binding site" evidence="2">
    <location>
        <position position="314"/>
    </location>
    <ligand>
        <name>Zn(2+)</name>
        <dbReference type="ChEBI" id="CHEBI:29105"/>
        <label>2</label>
    </ligand>
</feature>
<feature type="binding site" evidence="2">
    <location>
        <position position="317"/>
    </location>
    <ligand>
        <name>Zn(2+)</name>
        <dbReference type="ChEBI" id="CHEBI:29105"/>
        <label>2</label>
    </ligand>
</feature>
<feature type="binding site" evidence="2">
    <location>
        <position position="322"/>
    </location>
    <ligand>
        <name>Zn(2+)</name>
        <dbReference type="ChEBI" id="CHEBI:29105"/>
        <label>1</label>
    </ligand>
</feature>
<feature type="binding site" evidence="2">
    <location>
        <position position="325"/>
    </location>
    <ligand>
        <name>Zn(2+)</name>
        <dbReference type="ChEBI" id="CHEBI:29105"/>
        <label>1</label>
    </ligand>
</feature>
<feature type="binding site" evidence="2">
    <location>
        <position position="344"/>
    </location>
    <ligand>
        <name>Zn(2+)</name>
        <dbReference type="ChEBI" id="CHEBI:29105"/>
        <label>2</label>
    </ligand>
</feature>
<feature type="binding site" evidence="2">
    <location>
        <position position="347"/>
    </location>
    <ligand>
        <name>Zn(2+)</name>
        <dbReference type="ChEBI" id="CHEBI:29105"/>
        <label>2</label>
    </ligand>
</feature>
<feature type="modified residue" description="Phosphoserine" evidence="8">
    <location>
        <position position="408"/>
    </location>
</feature>
<organism>
    <name type="scientific">Homo sapiens</name>
    <name type="common">Human</name>
    <dbReference type="NCBI Taxonomy" id="9606"/>
    <lineage>
        <taxon>Eukaryota</taxon>
        <taxon>Metazoa</taxon>
        <taxon>Chordata</taxon>
        <taxon>Craniata</taxon>
        <taxon>Vertebrata</taxon>
        <taxon>Euteleostomi</taxon>
        <taxon>Mammalia</taxon>
        <taxon>Eutheria</taxon>
        <taxon>Euarchontoglires</taxon>
        <taxon>Primates</taxon>
        <taxon>Haplorrhini</taxon>
        <taxon>Catarrhini</taxon>
        <taxon>Hominidae</taxon>
        <taxon>Homo</taxon>
    </lineage>
</organism>
<evidence type="ECO:0000250" key="1">
    <source>
        <dbReference type="UniProtKB" id="E9Q4P1"/>
    </source>
</evidence>
<evidence type="ECO:0000255" key="2">
    <source>
        <dbReference type="PROSITE-ProRule" id="PRU00091"/>
    </source>
</evidence>
<evidence type="ECO:0000269" key="3">
    <source>
    </source>
</evidence>
<evidence type="ECO:0000269" key="4">
    <source>
    </source>
</evidence>
<evidence type="ECO:0000269" key="5">
    <source>
    </source>
</evidence>
<evidence type="ECO:0000303" key="6">
    <source>
    </source>
</evidence>
<evidence type="ECO:0000305" key="7"/>
<evidence type="ECO:0007744" key="8">
    <source>
    </source>
</evidence>
<accession>Q8IWB7</accession>
<accession>Q53S17</accession>
<accession>Q9H9D5</accession>
<accession>Q9P2B3</accession>